<comment type="function">
    <text evidence="1">Binds to DNA non-specifically. Could be a regulatory factor involved in maltose metabolism.</text>
</comment>
<comment type="similarity">
    <text evidence="1">Belongs to the SfsA family.</text>
</comment>
<feature type="chain" id="PRO_0000152304" description="Sugar fermentation stimulation protein A">
    <location>
        <begin position="1"/>
        <end position="234"/>
    </location>
</feature>
<feature type="DNA-binding region" description="H-T-H motif" evidence="1">
    <location>
        <begin position="201"/>
        <end position="220"/>
    </location>
</feature>
<dbReference type="EMBL" id="AE006468">
    <property type="protein sequence ID" value="AAL19151.1"/>
    <property type="molecule type" value="Genomic_DNA"/>
</dbReference>
<dbReference type="RefSeq" id="NP_459192.1">
    <property type="nucleotide sequence ID" value="NC_003197.2"/>
</dbReference>
<dbReference type="RefSeq" id="WP_000899412.1">
    <property type="nucleotide sequence ID" value="NC_003197.2"/>
</dbReference>
<dbReference type="SMR" id="Q8ZRQ6"/>
<dbReference type="STRING" id="99287.STM0187"/>
<dbReference type="PaxDb" id="99287-STM0187"/>
<dbReference type="GeneID" id="1251705"/>
<dbReference type="KEGG" id="stm:STM0187"/>
<dbReference type="PATRIC" id="fig|99287.12.peg.197"/>
<dbReference type="HOGENOM" id="CLU_052299_2_0_6"/>
<dbReference type="OMA" id="CANTGPM"/>
<dbReference type="PhylomeDB" id="Q8ZRQ6"/>
<dbReference type="BioCyc" id="SENT99287:STM0187-MONOMER"/>
<dbReference type="Proteomes" id="UP000001014">
    <property type="component" value="Chromosome"/>
</dbReference>
<dbReference type="GO" id="GO:0003677">
    <property type="term" value="F:DNA binding"/>
    <property type="evidence" value="ECO:0000318"/>
    <property type="project" value="GO_Central"/>
</dbReference>
<dbReference type="CDD" id="cd22359">
    <property type="entry name" value="SfsA-like_bacterial"/>
    <property type="match status" value="1"/>
</dbReference>
<dbReference type="FunFam" id="2.40.50.580:FF:000001">
    <property type="entry name" value="Sugar fermentation stimulation protein A"/>
    <property type="match status" value="1"/>
</dbReference>
<dbReference type="FunFam" id="3.40.1350.60:FF:000001">
    <property type="entry name" value="Sugar fermentation stimulation protein A"/>
    <property type="match status" value="1"/>
</dbReference>
<dbReference type="Gene3D" id="2.40.50.580">
    <property type="match status" value="1"/>
</dbReference>
<dbReference type="Gene3D" id="3.40.1350.60">
    <property type="match status" value="1"/>
</dbReference>
<dbReference type="HAMAP" id="MF_00095">
    <property type="entry name" value="SfsA"/>
    <property type="match status" value="1"/>
</dbReference>
<dbReference type="InterPro" id="IPR005224">
    <property type="entry name" value="SfsA"/>
</dbReference>
<dbReference type="InterPro" id="IPR040452">
    <property type="entry name" value="SfsA_C"/>
</dbReference>
<dbReference type="InterPro" id="IPR041465">
    <property type="entry name" value="SfsA_N"/>
</dbReference>
<dbReference type="NCBIfam" id="TIGR00230">
    <property type="entry name" value="sfsA"/>
    <property type="match status" value="1"/>
</dbReference>
<dbReference type="PANTHER" id="PTHR30545">
    <property type="entry name" value="SUGAR FERMENTATION STIMULATION PROTEIN A"/>
    <property type="match status" value="1"/>
</dbReference>
<dbReference type="PANTHER" id="PTHR30545:SF2">
    <property type="entry name" value="SUGAR FERMENTATION STIMULATION PROTEIN A"/>
    <property type="match status" value="1"/>
</dbReference>
<dbReference type="Pfam" id="PF03749">
    <property type="entry name" value="SfsA"/>
    <property type="match status" value="1"/>
</dbReference>
<dbReference type="Pfam" id="PF17746">
    <property type="entry name" value="SfsA_N"/>
    <property type="match status" value="1"/>
</dbReference>
<name>SFSA_SALTY</name>
<protein>
    <recommendedName>
        <fullName evidence="1">Sugar fermentation stimulation protein A</fullName>
    </recommendedName>
</protein>
<organism>
    <name type="scientific">Salmonella typhimurium (strain LT2 / SGSC1412 / ATCC 700720)</name>
    <dbReference type="NCBI Taxonomy" id="99287"/>
    <lineage>
        <taxon>Bacteria</taxon>
        <taxon>Pseudomonadati</taxon>
        <taxon>Pseudomonadota</taxon>
        <taxon>Gammaproteobacteria</taxon>
        <taxon>Enterobacterales</taxon>
        <taxon>Enterobacteriaceae</taxon>
        <taxon>Salmonella</taxon>
    </lineage>
</organism>
<accession>Q8ZRQ6</accession>
<evidence type="ECO:0000255" key="1">
    <source>
        <dbReference type="HAMAP-Rule" id="MF_00095"/>
    </source>
</evidence>
<proteinExistence type="inferred from homology"/>
<gene>
    <name evidence="1" type="primary">sfsA</name>
    <name type="ordered locus">STM0187</name>
</gene>
<keyword id="KW-0238">DNA-binding</keyword>
<keyword id="KW-1185">Reference proteome</keyword>
<sequence length="234" mass="26160">MLFSPPLQRATLIQRYKRFLADVITPDGTTLTLHCPNTGAMTGCATPGDTVWYSTSENTKRKYPHTWELTETQSGAFICVNTLRANQLTKEAIQENRLPALAGYNILKSEVKYGAERSRIDFMLQADFRPDCYIEVKSVTLAEKENGYFPDAITERGQKHLRELMGVAAAGHRAVVVFAVLHSAITRFSPARHIDIKYAQLLSEAQNKGVEVLAYKAELSAQKMELNEPVPITL</sequence>
<reference key="1">
    <citation type="journal article" date="2001" name="Nature">
        <title>Complete genome sequence of Salmonella enterica serovar Typhimurium LT2.</title>
        <authorList>
            <person name="McClelland M."/>
            <person name="Sanderson K.E."/>
            <person name="Spieth J."/>
            <person name="Clifton S.W."/>
            <person name="Latreille P."/>
            <person name="Courtney L."/>
            <person name="Porwollik S."/>
            <person name="Ali J."/>
            <person name="Dante M."/>
            <person name="Du F."/>
            <person name="Hou S."/>
            <person name="Layman D."/>
            <person name="Leonard S."/>
            <person name="Nguyen C."/>
            <person name="Scott K."/>
            <person name="Holmes A."/>
            <person name="Grewal N."/>
            <person name="Mulvaney E."/>
            <person name="Ryan E."/>
            <person name="Sun H."/>
            <person name="Florea L."/>
            <person name="Miller W."/>
            <person name="Stoneking T."/>
            <person name="Nhan M."/>
            <person name="Waterston R."/>
            <person name="Wilson R.K."/>
        </authorList>
    </citation>
    <scope>NUCLEOTIDE SEQUENCE [LARGE SCALE GENOMIC DNA]</scope>
    <source>
        <strain>LT2 / SGSC1412 / ATCC 700720</strain>
    </source>
</reference>